<sequence length="106" mass="11969">MTKVLVVVALLVTLISYSSSEGIDDLEADELLSLMANEQTRAKACTPRYYDCSHDRHSCCRSSMFKDVCTCFYPEGGDNKEVCTCQQPKHLKYMEKATDKIKNLFG</sequence>
<reference key="1">
    <citation type="journal article" date="2010" name="Zoology">
        <title>Transcriptome analysis of the venom glands of the Chinese wolf spider Lycosa singoriensis.</title>
        <authorList>
            <person name="Zhang Y."/>
            <person name="Chen J."/>
            <person name="Tang X."/>
            <person name="Wang F."/>
            <person name="Jiang L."/>
            <person name="Xiong X."/>
            <person name="Wang M."/>
            <person name="Rong M."/>
            <person name="Liu Z."/>
            <person name="Liang S."/>
        </authorList>
    </citation>
    <scope>NUCLEOTIDE SEQUENCE [LARGE SCALE MRNA]</scope>
    <source>
        <tissue>Venom gland</tissue>
    </source>
</reference>
<accession>B6DCU7</accession>
<evidence type="ECO:0000250" key="1"/>
<evidence type="ECO:0000255" key="2"/>
<evidence type="ECO:0000305" key="3"/>
<protein>
    <recommendedName>
        <fullName>Toxin-like structure LSTX-D8</fullName>
    </recommendedName>
</protein>
<feature type="signal peptide" evidence="2">
    <location>
        <begin position="1"/>
        <end position="20"/>
    </location>
</feature>
<feature type="propeptide" id="PRO_0000401707" evidence="1">
    <location>
        <begin position="21"/>
        <end position="41"/>
    </location>
</feature>
<feature type="chain" id="PRO_0000401708" description="Toxin-like structure LSTX-D8">
    <location>
        <begin position="42"/>
        <end position="106"/>
    </location>
</feature>
<feature type="disulfide bond" evidence="1">
    <location>
        <begin position="45"/>
        <end position="60"/>
    </location>
</feature>
<feature type="disulfide bond" evidence="1">
    <location>
        <begin position="52"/>
        <end position="69"/>
    </location>
</feature>
<feature type="disulfide bond" evidence="1">
    <location>
        <begin position="59"/>
        <end position="85"/>
    </location>
</feature>
<feature type="disulfide bond" evidence="1">
    <location>
        <begin position="71"/>
        <end position="83"/>
    </location>
</feature>
<dbReference type="EMBL" id="EU926031">
    <property type="protein sequence ID" value="ACI41363.1"/>
    <property type="molecule type" value="mRNA"/>
</dbReference>
<dbReference type="EMBL" id="FM864035">
    <property type="protein sequence ID" value="CAS03632.1"/>
    <property type="molecule type" value="mRNA"/>
</dbReference>
<dbReference type="SMR" id="B6DCU7"/>
<dbReference type="ArachnoServer" id="AS001741">
    <property type="toxin name" value="U3-lycotoxin-Ls1z"/>
</dbReference>
<dbReference type="GO" id="GO:0005576">
    <property type="term" value="C:extracellular region"/>
    <property type="evidence" value="ECO:0007669"/>
    <property type="project" value="UniProtKB-SubCell"/>
</dbReference>
<dbReference type="GO" id="GO:0090729">
    <property type="term" value="F:toxin activity"/>
    <property type="evidence" value="ECO:0007669"/>
    <property type="project" value="UniProtKB-KW"/>
</dbReference>
<dbReference type="InterPro" id="IPR019553">
    <property type="entry name" value="Spider_toxin_CSTX_knottin"/>
</dbReference>
<dbReference type="InterPro" id="IPR011142">
    <property type="entry name" value="Spider_toxin_CSTX_Knottin_CS"/>
</dbReference>
<dbReference type="Pfam" id="PF10530">
    <property type="entry name" value="Toxin_35"/>
    <property type="match status" value="1"/>
</dbReference>
<dbReference type="PROSITE" id="PS60029">
    <property type="entry name" value="SPIDER_CSTX"/>
    <property type="match status" value="1"/>
</dbReference>
<proteinExistence type="evidence at transcript level"/>
<organism>
    <name type="scientific">Lycosa singoriensis</name>
    <name type="common">Wolf spider</name>
    <name type="synonym">Aranea singoriensis</name>
    <dbReference type="NCBI Taxonomy" id="434756"/>
    <lineage>
        <taxon>Eukaryota</taxon>
        <taxon>Metazoa</taxon>
        <taxon>Ecdysozoa</taxon>
        <taxon>Arthropoda</taxon>
        <taxon>Chelicerata</taxon>
        <taxon>Arachnida</taxon>
        <taxon>Araneae</taxon>
        <taxon>Araneomorphae</taxon>
        <taxon>Entelegynae</taxon>
        <taxon>Lycosoidea</taxon>
        <taxon>Lycosidae</taxon>
        <taxon>Lycosa</taxon>
    </lineage>
</organism>
<name>TXZ08_LYCSI</name>
<keyword id="KW-1015">Disulfide bond</keyword>
<keyword id="KW-0960">Knottin</keyword>
<keyword id="KW-0964">Secreted</keyword>
<keyword id="KW-0732">Signal</keyword>
<keyword id="KW-0800">Toxin</keyword>
<comment type="subcellular location">
    <subcellularLocation>
        <location evidence="1">Secreted</location>
    </subcellularLocation>
</comment>
<comment type="tissue specificity">
    <text>Expressed by the venom gland.</text>
</comment>
<comment type="domain">
    <text evidence="1">The presence of a 'disulfide through disulfide knot' structurally defines this protein as a knottin.</text>
</comment>
<comment type="similarity">
    <text evidence="3">Belongs to the neurotoxin 19 (CSTX) family. 02 (D7) subfamily.</text>
</comment>